<reference key="1">
    <citation type="journal article" date="2000" name="Biochem. Biophys. Res. Commun.">
        <title>Identification of a family of non-canonical ubiquitin-conjugating enzymes structurally related to yeast UBC6.</title>
        <authorList>
            <person name="Lester D.H."/>
            <person name="Farquharson C."/>
            <person name="Russell G.C."/>
            <person name="Houston B."/>
        </authorList>
    </citation>
    <scope>NUCLEOTIDE SEQUENCE [MRNA]</scope>
</reference>
<reference key="2">
    <citation type="journal article" date="2002" name="J. Cell Sci.">
        <title>A role for mammalian Ubc6 homologues in ER-associated protein degradation.</title>
        <authorList>
            <person name="Lenk U."/>
            <person name="Yu H."/>
            <person name="Walter J."/>
            <person name="Gelman M.S."/>
            <person name="Hartmann E."/>
            <person name="Kopito R.R."/>
            <person name="Sommer T."/>
        </authorList>
    </citation>
    <scope>NUCLEOTIDE SEQUENCE [MRNA]</scope>
    <scope>VARIANT VAL-55</scope>
    <scope>FUNCTION</scope>
    <scope>MUTAGENESIS OF CYS-91</scope>
    <scope>SUBCELLULAR LOCATION</scope>
</reference>
<reference key="3">
    <citation type="journal article" date="2000" name="Genome Res.">
        <title>Identification of novel human genes evolutionarily conserved in Caenorhabditis elegans by comparative proteomics.</title>
        <authorList>
            <person name="Lai C.-H."/>
            <person name="Chou C.-Y."/>
            <person name="Ch'ang L.-Y."/>
            <person name="Liu C.-S."/>
            <person name="Lin W.-C."/>
        </authorList>
    </citation>
    <scope>NUCLEOTIDE SEQUENCE [LARGE SCALE MRNA]</scope>
</reference>
<reference key="4">
    <citation type="journal article" date="2000" name="Genome Res.">
        <title>Cloning and functional analysis of cDNAs with open reading frames for 300 previously undefined genes expressed in CD34+ hematopoietic stem/progenitor cells.</title>
        <authorList>
            <person name="Zhang Q.-H."/>
            <person name="Ye M."/>
            <person name="Wu X.-Y."/>
            <person name="Ren S.-X."/>
            <person name="Zhao M."/>
            <person name="Zhao C.-J."/>
            <person name="Fu G."/>
            <person name="Shen Y."/>
            <person name="Fan H.-Y."/>
            <person name="Lu G."/>
            <person name="Zhong M."/>
            <person name="Xu X.-R."/>
            <person name="Han Z.-G."/>
            <person name="Zhang J.-W."/>
            <person name="Tao J."/>
            <person name="Huang Q.-H."/>
            <person name="Zhou J."/>
            <person name="Hu G.-X."/>
            <person name="Gu J."/>
            <person name="Chen S.-J."/>
            <person name="Chen Z."/>
        </authorList>
    </citation>
    <scope>NUCLEOTIDE SEQUENCE [LARGE SCALE MRNA]</scope>
    <scope>VARIANT VAL-229</scope>
    <source>
        <tissue>Umbilical cord blood</tissue>
    </source>
</reference>
<reference key="5">
    <citation type="journal article" date="2004" name="Nat. Genet.">
        <title>Complete sequencing and characterization of 21,243 full-length human cDNAs.</title>
        <authorList>
            <person name="Ota T."/>
            <person name="Suzuki Y."/>
            <person name="Nishikawa T."/>
            <person name="Otsuki T."/>
            <person name="Sugiyama T."/>
            <person name="Irie R."/>
            <person name="Wakamatsu A."/>
            <person name="Hayashi K."/>
            <person name="Sato H."/>
            <person name="Nagai K."/>
            <person name="Kimura K."/>
            <person name="Makita H."/>
            <person name="Sekine M."/>
            <person name="Obayashi M."/>
            <person name="Nishi T."/>
            <person name="Shibahara T."/>
            <person name="Tanaka T."/>
            <person name="Ishii S."/>
            <person name="Yamamoto J."/>
            <person name="Saito K."/>
            <person name="Kawai Y."/>
            <person name="Isono Y."/>
            <person name="Nakamura Y."/>
            <person name="Nagahari K."/>
            <person name="Murakami K."/>
            <person name="Yasuda T."/>
            <person name="Iwayanagi T."/>
            <person name="Wagatsuma M."/>
            <person name="Shiratori A."/>
            <person name="Sudo H."/>
            <person name="Hosoiri T."/>
            <person name="Kaku Y."/>
            <person name="Kodaira H."/>
            <person name="Kondo H."/>
            <person name="Sugawara M."/>
            <person name="Takahashi M."/>
            <person name="Kanda K."/>
            <person name="Yokoi T."/>
            <person name="Furuya T."/>
            <person name="Kikkawa E."/>
            <person name="Omura Y."/>
            <person name="Abe K."/>
            <person name="Kamihara K."/>
            <person name="Katsuta N."/>
            <person name="Sato K."/>
            <person name="Tanikawa M."/>
            <person name="Yamazaki M."/>
            <person name="Ninomiya K."/>
            <person name="Ishibashi T."/>
            <person name="Yamashita H."/>
            <person name="Murakawa K."/>
            <person name="Fujimori K."/>
            <person name="Tanai H."/>
            <person name="Kimata M."/>
            <person name="Watanabe M."/>
            <person name="Hiraoka S."/>
            <person name="Chiba Y."/>
            <person name="Ishida S."/>
            <person name="Ono Y."/>
            <person name="Takiguchi S."/>
            <person name="Watanabe S."/>
            <person name="Yosida M."/>
            <person name="Hotuta T."/>
            <person name="Kusano J."/>
            <person name="Kanehori K."/>
            <person name="Takahashi-Fujii A."/>
            <person name="Hara H."/>
            <person name="Tanase T.-O."/>
            <person name="Nomura Y."/>
            <person name="Togiya S."/>
            <person name="Komai F."/>
            <person name="Hara R."/>
            <person name="Takeuchi K."/>
            <person name="Arita M."/>
            <person name="Imose N."/>
            <person name="Musashino K."/>
            <person name="Yuuki H."/>
            <person name="Oshima A."/>
            <person name="Sasaki N."/>
            <person name="Aotsuka S."/>
            <person name="Yoshikawa Y."/>
            <person name="Matsunawa H."/>
            <person name="Ichihara T."/>
            <person name="Shiohata N."/>
            <person name="Sano S."/>
            <person name="Moriya S."/>
            <person name="Momiyama H."/>
            <person name="Satoh N."/>
            <person name="Takami S."/>
            <person name="Terashima Y."/>
            <person name="Suzuki O."/>
            <person name="Nakagawa S."/>
            <person name="Senoh A."/>
            <person name="Mizoguchi H."/>
            <person name="Goto Y."/>
            <person name="Shimizu F."/>
            <person name="Wakebe H."/>
            <person name="Hishigaki H."/>
            <person name="Watanabe T."/>
            <person name="Sugiyama A."/>
            <person name="Takemoto M."/>
            <person name="Kawakami B."/>
            <person name="Yamazaki M."/>
            <person name="Watanabe K."/>
            <person name="Kumagai A."/>
            <person name="Itakura S."/>
            <person name="Fukuzumi Y."/>
            <person name="Fujimori Y."/>
            <person name="Komiyama M."/>
            <person name="Tashiro H."/>
            <person name="Tanigami A."/>
            <person name="Fujiwara T."/>
            <person name="Ono T."/>
            <person name="Yamada K."/>
            <person name="Fujii Y."/>
            <person name="Ozaki K."/>
            <person name="Hirao M."/>
            <person name="Ohmori Y."/>
            <person name="Kawabata A."/>
            <person name="Hikiji T."/>
            <person name="Kobatake N."/>
            <person name="Inagaki H."/>
            <person name="Ikema Y."/>
            <person name="Okamoto S."/>
            <person name="Okitani R."/>
            <person name="Kawakami T."/>
            <person name="Noguchi S."/>
            <person name="Itoh T."/>
            <person name="Shigeta K."/>
            <person name="Senba T."/>
            <person name="Matsumura K."/>
            <person name="Nakajima Y."/>
            <person name="Mizuno T."/>
            <person name="Morinaga M."/>
            <person name="Sasaki M."/>
            <person name="Togashi T."/>
            <person name="Oyama M."/>
            <person name="Hata H."/>
            <person name="Watanabe M."/>
            <person name="Komatsu T."/>
            <person name="Mizushima-Sugano J."/>
            <person name="Satoh T."/>
            <person name="Shirai Y."/>
            <person name="Takahashi Y."/>
            <person name="Nakagawa K."/>
            <person name="Okumura K."/>
            <person name="Nagase T."/>
            <person name="Nomura N."/>
            <person name="Kikuchi H."/>
            <person name="Masuho Y."/>
            <person name="Yamashita R."/>
            <person name="Nakai K."/>
            <person name="Yada T."/>
            <person name="Nakamura Y."/>
            <person name="Ohara O."/>
            <person name="Isogai T."/>
            <person name="Sugano S."/>
        </authorList>
    </citation>
    <scope>NUCLEOTIDE SEQUENCE [LARGE SCALE MRNA]</scope>
</reference>
<reference key="6">
    <citation type="submission" date="2005-04" db="EMBL/GenBank/DDBJ databases">
        <authorList>
            <person name="Totoki Y."/>
            <person name="Toyoda A."/>
            <person name="Takeda T."/>
            <person name="Sakaki Y."/>
            <person name="Tanaka A."/>
            <person name="Yokoyama S."/>
        </authorList>
    </citation>
    <scope>NUCLEOTIDE SEQUENCE [LARGE SCALE MRNA]</scope>
    <scope>VARIANT VAL-229</scope>
    <source>
        <tissue>Spleen</tissue>
    </source>
</reference>
<reference key="7">
    <citation type="journal article" date="2003" name="Nature">
        <title>The DNA sequence and analysis of human chromosome 6.</title>
        <authorList>
            <person name="Mungall A.J."/>
            <person name="Palmer S.A."/>
            <person name="Sims S.K."/>
            <person name="Edwards C.A."/>
            <person name="Ashurst J.L."/>
            <person name="Wilming L."/>
            <person name="Jones M.C."/>
            <person name="Horton R."/>
            <person name="Hunt S.E."/>
            <person name="Scott C.E."/>
            <person name="Gilbert J.G.R."/>
            <person name="Clamp M.E."/>
            <person name="Bethel G."/>
            <person name="Milne S."/>
            <person name="Ainscough R."/>
            <person name="Almeida J.P."/>
            <person name="Ambrose K.D."/>
            <person name="Andrews T.D."/>
            <person name="Ashwell R.I.S."/>
            <person name="Babbage A.K."/>
            <person name="Bagguley C.L."/>
            <person name="Bailey J."/>
            <person name="Banerjee R."/>
            <person name="Barker D.J."/>
            <person name="Barlow K.F."/>
            <person name="Bates K."/>
            <person name="Beare D.M."/>
            <person name="Beasley H."/>
            <person name="Beasley O."/>
            <person name="Bird C.P."/>
            <person name="Blakey S.E."/>
            <person name="Bray-Allen S."/>
            <person name="Brook J."/>
            <person name="Brown A.J."/>
            <person name="Brown J.Y."/>
            <person name="Burford D.C."/>
            <person name="Burrill W."/>
            <person name="Burton J."/>
            <person name="Carder C."/>
            <person name="Carter N.P."/>
            <person name="Chapman J.C."/>
            <person name="Clark S.Y."/>
            <person name="Clark G."/>
            <person name="Clee C.M."/>
            <person name="Clegg S."/>
            <person name="Cobley V."/>
            <person name="Collier R.E."/>
            <person name="Collins J.E."/>
            <person name="Colman L.K."/>
            <person name="Corby N.R."/>
            <person name="Coville G.J."/>
            <person name="Culley K.M."/>
            <person name="Dhami P."/>
            <person name="Davies J."/>
            <person name="Dunn M."/>
            <person name="Earthrowl M.E."/>
            <person name="Ellington A.E."/>
            <person name="Evans K.A."/>
            <person name="Faulkner L."/>
            <person name="Francis M.D."/>
            <person name="Frankish A."/>
            <person name="Frankland J."/>
            <person name="French L."/>
            <person name="Garner P."/>
            <person name="Garnett J."/>
            <person name="Ghori M.J."/>
            <person name="Gilby L.M."/>
            <person name="Gillson C.J."/>
            <person name="Glithero R.J."/>
            <person name="Grafham D.V."/>
            <person name="Grant M."/>
            <person name="Gribble S."/>
            <person name="Griffiths C."/>
            <person name="Griffiths M.N.D."/>
            <person name="Hall R."/>
            <person name="Halls K.S."/>
            <person name="Hammond S."/>
            <person name="Harley J.L."/>
            <person name="Hart E.A."/>
            <person name="Heath P.D."/>
            <person name="Heathcott R."/>
            <person name="Holmes S.J."/>
            <person name="Howden P.J."/>
            <person name="Howe K.L."/>
            <person name="Howell G.R."/>
            <person name="Huckle E."/>
            <person name="Humphray S.J."/>
            <person name="Humphries M.D."/>
            <person name="Hunt A.R."/>
            <person name="Johnson C.M."/>
            <person name="Joy A.A."/>
            <person name="Kay M."/>
            <person name="Keenan S.J."/>
            <person name="Kimberley A.M."/>
            <person name="King A."/>
            <person name="Laird G.K."/>
            <person name="Langford C."/>
            <person name="Lawlor S."/>
            <person name="Leongamornlert D.A."/>
            <person name="Leversha M."/>
            <person name="Lloyd C.R."/>
            <person name="Lloyd D.M."/>
            <person name="Loveland J.E."/>
            <person name="Lovell J."/>
            <person name="Martin S."/>
            <person name="Mashreghi-Mohammadi M."/>
            <person name="Maslen G.L."/>
            <person name="Matthews L."/>
            <person name="McCann O.T."/>
            <person name="McLaren S.J."/>
            <person name="McLay K."/>
            <person name="McMurray A."/>
            <person name="Moore M.J.F."/>
            <person name="Mullikin J.C."/>
            <person name="Niblett D."/>
            <person name="Nickerson T."/>
            <person name="Novik K.L."/>
            <person name="Oliver K."/>
            <person name="Overton-Larty E.K."/>
            <person name="Parker A."/>
            <person name="Patel R."/>
            <person name="Pearce A.V."/>
            <person name="Peck A.I."/>
            <person name="Phillimore B.J.C.T."/>
            <person name="Phillips S."/>
            <person name="Plumb R.W."/>
            <person name="Porter K.M."/>
            <person name="Ramsey Y."/>
            <person name="Ranby S.A."/>
            <person name="Rice C.M."/>
            <person name="Ross M.T."/>
            <person name="Searle S.M."/>
            <person name="Sehra H.K."/>
            <person name="Sheridan E."/>
            <person name="Skuce C.D."/>
            <person name="Smith S."/>
            <person name="Smith M."/>
            <person name="Spraggon L."/>
            <person name="Squares S.L."/>
            <person name="Steward C.A."/>
            <person name="Sycamore N."/>
            <person name="Tamlyn-Hall G."/>
            <person name="Tester J."/>
            <person name="Theaker A.J."/>
            <person name="Thomas D.W."/>
            <person name="Thorpe A."/>
            <person name="Tracey A."/>
            <person name="Tromans A."/>
            <person name="Tubby B."/>
            <person name="Wall M."/>
            <person name="Wallis J.M."/>
            <person name="West A.P."/>
            <person name="White S.S."/>
            <person name="Whitehead S.L."/>
            <person name="Whittaker H."/>
            <person name="Wild A."/>
            <person name="Willey D.J."/>
            <person name="Wilmer T.E."/>
            <person name="Wood J.M."/>
            <person name="Wray P.W."/>
            <person name="Wyatt J.C."/>
            <person name="Young L."/>
            <person name="Younger R.M."/>
            <person name="Bentley D.R."/>
            <person name="Coulson A."/>
            <person name="Durbin R.M."/>
            <person name="Hubbard T."/>
            <person name="Sulston J.E."/>
            <person name="Dunham I."/>
            <person name="Rogers J."/>
            <person name="Beck S."/>
        </authorList>
    </citation>
    <scope>NUCLEOTIDE SEQUENCE [LARGE SCALE GENOMIC DNA]</scope>
</reference>
<reference key="8">
    <citation type="submission" date="2005-09" db="EMBL/GenBank/DDBJ databases">
        <authorList>
            <person name="Mural R.J."/>
            <person name="Istrail S."/>
            <person name="Sutton G."/>
            <person name="Florea L."/>
            <person name="Halpern A.L."/>
            <person name="Mobarry C.M."/>
            <person name="Lippert R."/>
            <person name="Walenz B."/>
            <person name="Shatkay H."/>
            <person name="Dew I."/>
            <person name="Miller J.R."/>
            <person name="Flanigan M.J."/>
            <person name="Edwards N.J."/>
            <person name="Bolanos R."/>
            <person name="Fasulo D."/>
            <person name="Halldorsson B.V."/>
            <person name="Hannenhalli S."/>
            <person name="Turner R."/>
            <person name="Yooseph S."/>
            <person name="Lu F."/>
            <person name="Nusskern D.R."/>
            <person name="Shue B.C."/>
            <person name="Zheng X.H."/>
            <person name="Zhong F."/>
            <person name="Delcher A.L."/>
            <person name="Huson D.H."/>
            <person name="Kravitz S.A."/>
            <person name="Mouchard L."/>
            <person name="Reinert K."/>
            <person name="Remington K.A."/>
            <person name="Clark A.G."/>
            <person name="Waterman M.S."/>
            <person name="Eichler E.E."/>
            <person name="Adams M.D."/>
            <person name="Hunkapiller M.W."/>
            <person name="Myers E.W."/>
            <person name="Venter J.C."/>
        </authorList>
    </citation>
    <scope>NUCLEOTIDE SEQUENCE [LARGE SCALE GENOMIC DNA]</scope>
    <scope>VARIANT VAL-229</scope>
</reference>
<reference key="9">
    <citation type="journal article" date="2004" name="Genome Res.">
        <title>The status, quality, and expansion of the NIH full-length cDNA project: the Mammalian Gene Collection (MGC).</title>
        <authorList>
            <consortium name="The MGC Project Team"/>
        </authorList>
    </citation>
    <scope>NUCLEOTIDE SEQUENCE [LARGE SCALE MRNA]</scope>
    <scope>VARIANT VAL-229</scope>
    <source>
        <tissue>Muscle</tissue>
    </source>
</reference>
<reference key="10">
    <citation type="journal article" date="2006" name="Cell">
        <title>Global, in vivo, and site-specific phosphorylation dynamics in signaling networks.</title>
        <authorList>
            <person name="Olsen J.V."/>
            <person name="Blagoev B."/>
            <person name="Gnad F."/>
            <person name="Macek B."/>
            <person name="Kumar C."/>
            <person name="Mortensen P."/>
            <person name="Mann M."/>
        </authorList>
    </citation>
    <scope>IDENTIFICATION BY MASS SPECTROMETRY [LARGE SCALE ANALYSIS]</scope>
    <source>
        <tissue>Cervix carcinoma</tissue>
    </source>
</reference>
<reference key="11">
    <citation type="journal article" date="2008" name="Proc. Natl. Acad. Sci. U.S.A.">
        <title>A quantitative atlas of mitotic phosphorylation.</title>
        <authorList>
            <person name="Dephoure N."/>
            <person name="Zhou C."/>
            <person name="Villen J."/>
            <person name="Beausoleil S.A."/>
            <person name="Bakalarski C.E."/>
            <person name="Elledge S.J."/>
            <person name="Gygi S.P."/>
        </authorList>
    </citation>
    <scope>PHOSPHORYLATION [LARGE SCALE ANALYSIS] AT SER-268</scope>
    <scope>IDENTIFICATION BY MASS SPECTROMETRY [LARGE SCALE ANALYSIS]</scope>
    <source>
        <tissue>Cervix carcinoma</tissue>
    </source>
</reference>
<reference key="12">
    <citation type="journal article" date="2010" name="Sci. Signal.">
        <title>Quantitative phosphoproteomics reveals widespread full phosphorylation site occupancy during mitosis.</title>
        <authorList>
            <person name="Olsen J.V."/>
            <person name="Vermeulen M."/>
            <person name="Santamaria A."/>
            <person name="Kumar C."/>
            <person name="Miller M.L."/>
            <person name="Jensen L.J."/>
            <person name="Gnad F."/>
            <person name="Cox J."/>
            <person name="Jensen T.S."/>
            <person name="Nigg E.A."/>
            <person name="Brunak S."/>
            <person name="Mann M."/>
        </authorList>
    </citation>
    <scope>PHOSPHORYLATION [LARGE SCALE ANALYSIS] AT SER-266</scope>
    <scope>IDENTIFICATION BY MASS SPECTROMETRY [LARGE SCALE ANALYSIS]</scope>
    <source>
        <tissue>Cervix carcinoma</tissue>
    </source>
</reference>
<reference key="13">
    <citation type="journal article" date="2011" name="BMC Syst. Biol.">
        <title>Initial characterization of the human central proteome.</title>
        <authorList>
            <person name="Burkard T.R."/>
            <person name="Planyavsky M."/>
            <person name="Kaupe I."/>
            <person name="Breitwieser F.P."/>
            <person name="Buerckstuemmer T."/>
            <person name="Bennett K.L."/>
            <person name="Superti-Furga G."/>
            <person name="Colinge J."/>
        </authorList>
    </citation>
    <scope>IDENTIFICATION BY MASS SPECTROMETRY [LARGE SCALE ANALYSIS]</scope>
</reference>
<reference key="14">
    <citation type="journal article" date="2011" name="Sci. Signal.">
        <title>System-wide temporal characterization of the proteome and phosphoproteome of human embryonic stem cell differentiation.</title>
        <authorList>
            <person name="Rigbolt K.T."/>
            <person name="Prokhorova T.A."/>
            <person name="Akimov V."/>
            <person name="Henningsen J."/>
            <person name="Johansen P.T."/>
            <person name="Kratchmarova I."/>
            <person name="Kassem M."/>
            <person name="Mann M."/>
            <person name="Olsen J.V."/>
            <person name="Blagoev B."/>
        </authorList>
    </citation>
    <scope>PHOSPHORYLATION [LARGE SCALE ANALYSIS] AT SER-266</scope>
    <scope>IDENTIFICATION BY MASS SPECTROMETRY [LARGE SCALE ANALYSIS]</scope>
</reference>
<reference key="15">
    <citation type="journal article" date="2012" name="Mol. Cell">
        <title>STT3B-dependent posttranslational N-glycosylation as a surveillance system for secretory protein.</title>
        <authorList>
            <person name="Sato T."/>
            <person name="Sako Y."/>
            <person name="Sho M."/>
            <person name="Momohara M."/>
            <person name="Suico M.A."/>
            <person name="Shuto T."/>
            <person name="Nishitoh H."/>
            <person name="Okiyoneda T."/>
            <person name="Kokame K."/>
            <person name="Kaneko M."/>
            <person name="Taura M."/>
            <person name="Miyata M."/>
            <person name="Chosa K."/>
            <person name="Koga T."/>
            <person name="Morino-Koga S."/>
            <person name="Wada I."/>
            <person name="Kai H."/>
        </authorList>
    </citation>
    <scope>FUNCTION IN ERAD PATHWAY</scope>
</reference>
<reference key="16">
    <citation type="journal article" date="2013" name="J. Proteome Res.">
        <title>Toward a comprehensive characterization of a human cancer cell phosphoproteome.</title>
        <authorList>
            <person name="Zhou H."/>
            <person name="Di Palma S."/>
            <person name="Preisinger C."/>
            <person name="Peng M."/>
            <person name="Polat A.N."/>
            <person name="Heck A.J."/>
            <person name="Mohammed S."/>
        </authorList>
    </citation>
    <scope>PHOSPHORYLATION [LARGE SCALE ANALYSIS] AT SER-184; SER-266 AND SER-268</scope>
    <scope>IDENTIFICATION BY MASS SPECTROMETRY [LARGE SCALE ANALYSIS]</scope>
    <source>
        <tissue>Cervix carcinoma</tissue>
        <tissue>Erythroleukemia</tissue>
    </source>
</reference>
<reference key="17">
    <citation type="journal article" date="2013" name="Biochem. J.">
        <title>Endoplasmic reticulum-associated ubiquitin-conjugating enzyme Ube2j1 is a novel substrate of MK2 (MAPKAP kinase-2) involved in MK2-mediated TNFalpha production.</title>
        <authorList>
            <person name="Menon M.B."/>
            <person name="Tiedje C."/>
            <person name="Lafera J."/>
            <person name="Ronkina N."/>
            <person name="Konen T."/>
            <person name="Kotlyarov A."/>
            <person name="Gaestel M."/>
        </authorList>
    </citation>
    <scope>FUNCTION</scope>
    <scope>PHOSPHORYLATION AT SER-184</scope>
    <scope>MUTAGENESIS OF SER-184</scope>
    <scope>SUBCELLULAR LOCATION</scope>
</reference>
<reference key="18">
    <citation type="journal article" date="2014" name="J. Proteomics">
        <title>An enzyme assisted RP-RPLC approach for in-depth analysis of human liver phosphoproteome.</title>
        <authorList>
            <person name="Bian Y."/>
            <person name="Song C."/>
            <person name="Cheng K."/>
            <person name="Dong M."/>
            <person name="Wang F."/>
            <person name="Huang J."/>
            <person name="Sun D."/>
            <person name="Wang L."/>
            <person name="Ye M."/>
            <person name="Zou H."/>
        </authorList>
    </citation>
    <scope>PHOSPHORYLATION [LARGE SCALE ANALYSIS] AT SER-266</scope>
    <scope>IDENTIFICATION BY MASS SPECTROMETRY [LARGE SCALE ANALYSIS]</scope>
    <source>
        <tissue>Liver</tissue>
    </source>
</reference>
<reference key="19">
    <citation type="journal article" date="2017" name="J. Cell Sci.">
        <title>Conserved cytoplasmic domains promote Hrd1 ubiquitin ligase complex formation for ER-associated degradation (ERAD).</title>
        <authorList>
            <person name="Schulz J."/>
            <person name="Avci D."/>
            <person name="Queisser M.A."/>
            <person name="Gutschmidt A."/>
            <person name="Dreher L.S."/>
            <person name="Fenech E.J."/>
            <person name="Volkmar N."/>
            <person name="Hayashi Y."/>
            <person name="Hoppe T."/>
            <person name="Christianson J.C."/>
        </authorList>
    </citation>
    <scope>IDENTIFICATION IN THE HRD1 COMPLEX</scope>
</reference>
<reference key="20">
    <citation type="journal article" date="2017" name="J. Cell Commun. Signal.">
        <title>The role of ubiquitin-conjugating enzyme Ube2j1 phosphorylation and its degradation by proteasome during endoplasmic stress recovery.</title>
        <authorList>
            <person name="Elangovan M."/>
            <person name="Chong H.K."/>
            <person name="Park J.H."/>
            <person name="Yeo E.J."/>
            <person name="Yoo Y.J."/>
        </authorList>
    </citation>
    <scope>FUNCTION</scope>
    <scope>MUTAGENESIS OF SER-184</scope>
    <scope>UBIQUITINATION</scope>
</reference>
<reference key="21">
    <citation type="journal article" date="2018" name="Virol. J.">
        <title>Ubiquitin-conjugating enzyme UBE2J1 negatively modulates interferon pathway and promotes RNA virus infection.</title>
        <authorList>
            <person name="Feng T."/>
            <person name="Deng L."/>
            <person name="Lu X."/>
            <person name="Pan W."/>
            <person name="Wu Q."/>
            <person name="Dai J."/>
        </authorList>
    </citation>
    <scope>FUNCTION (MICROBIAL INFECTION)</scope>
    <scope>INDUCTION BY DENGUE VIRUS INFECTION</scope>
</reference>
<reference key="22">
    <citation type="journal article" date="2021" name="Cell Rep.">
        <title>The ER-embedded UBE2J1/RNF26 ubiquitylation complex exerts spatiotemporal control over the endolysosomal pathway.</title>
        <authorList>
            <person name="Cremer T."/>
            <person name="Jongsma M.L.M."/>
            <person name="Trulsson F."/>
            <person name="Vertegaal A.C.O."/>
            <person name="Neefjes J."/>
            <person name="Berlin I."/>
        </authorList>
    </citation>
    <scope>FUNCTION</scope>
    <scope>SUBCELLULAR LOCATION</scope>
    <scope>INTERACTION WITH RNF26</scope>
    <scope>CATALYTIC ACTIVITY</scope>
</reference>
<reference key="23">
    <citation type="journal article" date="2022" name="BMC Biol.">
        <title>The testis-specific E3 ubiquitin ligase RNF133 is required for fecundity in mice.</title>
        <authorList>
            <person name="Nozawa K."/>
            <person name="Fujihara Y."/>
            <person name="Devlin D.J."/>
            <person name="Deras R.E."/>
            <person name="Kent K."/>
            <person name="Larina I.V."/>
            <person name="Umezu K."/>
            <person name="Yu Z."/>
            <person name="Sutton C.M."/>
            <person name="Ye Q."/>
            <person name="Dean L.K."/>
            <person name="Emori C."/>
            <person name="Ikawa M."/>
            <person name="Garcia T.X."/>
            <person name="Matzuk M.M."/>
        </authorList>
    </citation>
    <scope>TISSUE SPECIFICITY</scope>
    <scope>FUNCTION</scope>
    <scope>INTERACTION WITH RNF133</scope>
    <scope>SUBCELLULAR LOCATION</scope>
</reference>
<dbReference type="EC" id="2.3.2.23" evidence="12"/>
<dbReference type="EMBL" id="AJ245898">
    <property type="protein sequence ID" value="CAB83212.1"/>
    <property type="molecule type" value="mRNA"/>
</dbReference>
<dbReference type="EMBL" id="U93243">
    <property type="protein sequence ID" value="AAF21505.1"/>
    <property type="molecule type" value="mRNA"/>
</dbReference>
<dbReference type="EMBL" id="AF151834">
    <property type="protein sequence ID" value="AAD34071.1"/>
    <property type="status" value="ALT_INIT"/>
    <property type="molecule type" value="mRNA"/>
</dbReference>
<dbReference type="EMBL" id="AF151039">
    <property type="protein sequence ID" value="AAF36125.1"/>
    <property type="status" value="ALT_FRAME"/>
    <property type="molecule type" value="mRNA"/>
</dbReference>
<dbReference type="EMBL" id="AF161502">
    <property type="protein sequence ID" value="AAF29117.1"/>
    <property type="molecule type" value="mRNA"/>
</dbReference>
<dbReference type="EMBL" id="AK290574">
    <property type="protein sequence ID" value="BAF83263.1"/>
    <property type="molecule type" value="mRNA"/>
</dbReference>
<dbReference type="EMBL" id="AK223464">
    <property type="protein sequence ID" value="BAD97184.1"/>
    <property type="molecule type" value="mRNA"/>
</dbReference>
<dbReference type="EMBL" id="AL138717">
    <property type="status" value="NOT_ANNOTATED_CDS"/>
    <property type="molecule type" value="Genomic_DNA"/>
</dbReference>
<dbReference type="EMBL" id="AL139804">
    <property type="status" value="NOT_ANNOTATED_CDS"/>
    <property type="molecule type" value="Genomic_DNA"/>
</dbReference>
<dbReference type="EMBL" id="CH471051">
    <property type="protein sequence ID" value="EAW48555.1"/>
    <property type="molecule type" value="Genomic_DNA"/>
</dbReference>
<dbReference type="EMBL" id="CH471051">
    <property type="protein sequence ID" value="EAW48556.1"/>
    <property type="molecule type" value="Genomic_DNA"/>
</dbReference>
<dbReference type="EMBL" id="BC013973">
    <property type="protein sequence ID" value="AAH13973.1"/>
    <property type="molecule type" value="mRNA"/>
</dbReference>
<dbReference type="CCDS" id="CCDS5021.1"/>
<dbReference type="RefSeq" id="NP_057105.2">
    <property type="nucleotide sequence ID" value="NM_016021.2"/>
</dbReference>
<dbReference type="SMR" id="Q9Y385"/>
<dbReference type="BioGRID" id="119555">
    <property type="interactions" value="224"/>
</dbReference>
<dbReference type="CORUM" id="Q9Y385"/>
<dbReference type="DIP" id="DIP-45598N"/>
<dbReference type="FunCoup" id="Q9Y385">
    <property type="interactions" value="2300"/>
</dbReference>
<dbReference type="IntAct" id="Q9Y385">
    <property type="interactions" value="81"/>
</dbReference>
<dbReference type="MINT" id="Q9Y385"/>
<dbReference type="STRING" id="9606.ENSP00000451261"/>
<dbReference type="GlyGen" id="Q9Y385">
    <property type="glycosylation" value="2 sites, 1 N-linked glycan (1 site), 1 O-linked glycan (1 site)"/>
</dbReference>
<dbReference type="iPTMnet" id="Q9Y385"/>
<dbReference type="MetOSite" id="Q9Y385"/>
<dbReference type="PhosphoSitePlus" id="Q9Y385"/>
<dbReference type="SwissPalm" id="Q9Y385"/>
<dbReference type="BioMuta" id="UBE2J1"/>
<dbReference type="DMDM" id="52000881"/>
<dbReference type="OGP" id="Q9Y385"/>
<dbReference type="CPTAC" id="CPTAC-1370"/>
<dbReference type="jPOST" id="Q9Y385"/>
<dbReference type="MassIVE" id="Q9Y385"/>
<dbReference type="PaxDb" id="9606-ENSP00000451261"/>
<dbReference type="PeptideAtlas" id="Q9Y385"/>
<dbReference type="ProteomicsDB" id="85984"/>
<dbReference type="Pumba" id="Q9Y385"/>
<dbReference type="ABCD" id="Q9Y385">
    <property type="antibodies" value="1 sequenced antibody"/>
</dbReference>
<dbReference type="Antibodypedia" id="1140">
    <property type="antibodies" value="363 antibodies from 26 providers"/>
</dbReference>
<dbReference type="CPTC" id="Q9Y385">
    <property type="antibodies" value="3 antibodies"/>
</dbReference>
<dbReference type="DNASU" id="51465"/>
<dbReference type="Ensembl" id="ENST00000435041.3">
    <property type="protein sequence ID" value="ENSP00000451261.1"/>
    <property type="gene ID" value="ENSG00000198833.7"/>
</dbReference>
<dbReference type="GeneID" id="51465"/>
<dbReference type="KEGG" id="hsa:51465"/>
<dbReference type="MANE-Select" id="ENST00000435041.3">
    <property type="protein sequence ID" value="ENSP00000451261.1"/>
    <property type="RefSeq nucleotide sequence ID" value="NM_016021.3"/>
    <property type="RefSeq protein sequence ID" value="NP_057105.2"/>
</dbReference>
<dbReference type="UCSC" id="uc003pnc.4">
    <property type="organism name" value="human"/>
</dbReference>
<dbReference type="AGR" id="HGNC:17598"/>
<dbReference type="CTD" id="51465"/>
<dbReference type="DisGeNET" id="51465"/>
<dbReference type="GeneCards" id="UBE2J1"/>
<dbReference type="HGNC" id="HGNC:17598">
    <property type="gene designation" value="UBE2J1"/>
</dbReference>
<dbReference type="HPA" id="ENSG00000198833">
    <property type="expression patterns" value="Low tissue specificity"/>
</dbReference>
<dbReference type="MIM" id="616175">
    <property type="type" value="gene"/>
</dbReference>
<dbReference type="neXtProt" id="NX_Q9Y385"/>
<dbReference type="OpenTargets" id="ENSG00000198833"/>
<dbReference type="PharmGKB" id="PA134906541"/>
<dbReference type="VEuPathDB" id="HostDB:ENSG00000198833"/>
<dbReference type="eggNOG" id="KOG0428">
    <property type="taxonomic scope" value="Eukaryota"/>
</dbReference>
<dbReference type="GeneTree" id="ENSGT00940000156652"/>
<dbReference type="HOGENOM" id="CLU_041481_0_0_1"/>
<dbReference type="InParanoid" id="Q9Y385"/>
<dbReference type="OMA" id="CGSTMKD"/>
<dbReference type="OrthoDB" id="1158011at2759"/>
<dbReference type="PAN-GO" id="Q9Y385">
    <property type="GO annotations" value="4 GO annotations based on evolutionary models"/>
</dbReference>
<dbReference type="PhylomeDB" id="Q9Y385"/>
<dbReference type="TreeFam" id="TF101124"/>
<dbReference type="BRENDA" id="2.3.2.23">
    <property type="organism ID" value="2681"/>
</dbReference>
<dbReference type="PathwayCommons" id="Q9Y385"/>
<dbReference type="Reactome" id="R-HSA-983168">
    <property type="pathway name" value="Antigen processing: Ubiquitination &amp; Proteasome degradation"/>
</dbReference>
<dbReference type="SignaLink" id="Q9Y385"/>
<dbReference type="SIGNOR" id="Q9Y385"/>
<dbReference type="UniPathway" id="UPA00143"/>
<dbReference type="BioGRID-ORCS" id="51465">
    <property type="hits" value="46 hits in 1174 CRISPR screens"/>
</dbReference>
<dbReference type="ChiTaRS" id="UBE2J1">
    <property type="organism name" value="human"/>
</dbReference>
<dbReference type="GeneWiki" id="UBE2J1"/>
<dbReference type="GenomeRNAi" id="51465"/>
<dbReference type="Pharos" id="Q9Y385">
    <property type="development level" value="Tbio"/>
</dbReference>
<dbReference type="PRO" id="PR:Q9Y385"/>
<dbReference type="Proteomes" id="UP000005640">
    <property type="component" value="Chromosome 6"/>
</dbReference>
<dbReference type="RNAct" id="Q9Y385">
    <property type="molecule type" value="protein"/>
</dbReference>
<dbReference type="Bgee" id="ENSG00000198833">
    <property type="expression patterns" value="Expressed in sperm and 204 other cell types or tissues"/>
</dbReference>
<dbReference type="GO" id="GO:0005789">
    <property type="term" value="C:endoplasmic reticulum membrane"/>
    <property type="evidence" value="ECO:0000314"/>
    <property type="project" value="UniProt"/>
</dbReference>
<dbReference type="GO" id="GO:0000836">
    <property type="term" value="C:Hrd1p ubiquitin ligase complex"/>
    <property type="evidence" value="ECO:0000314"/>
    <property type="project" value="UniProtKB"/>
</dbReference>
<dbReference type="GO" id="GO:0005634">
    <property type="term" value="C:nucleus"/>
    <property type="evidence" value="ECO:0000318"/>
    <property type="project" value="GO_Central"/>
</dbReference>
<dbReference type="GO" id="GO:0005524">
    <property type="term" value="F:ATP binding"/>
    <property type="evidence" value="ECO:0007669"/>
    <property type="project" value="UniProtKB-KW"/>
</dbReference>
<dbReference type="GO" id="GO:0061631">
    <property type="term" value="F:ubiquitin conjugating enzyme activity"/>
    <property type="evidence" value="ECO:0000315"/>
    <property type="project" value="MGI"/>
</dbReference>
<dbReference type="GO" id="GO:0031625">
    <property type="term" value="F:ubiquitin protein ligase binding"/>
    <property type="evidence" value="ECO:0000353"/>
    <property type="project" value="ParkinsonsUK-UCL"/>
</dbReference>
<dbReference type="GO" id="GO:0036503">
    <property type="term" value="P:ERAD pathway"/>
    <property type="evidence" value="ECO:0000315"/>
    <property type="project" value="UniProtKB"/>
</dbReference>
<dbReference type="GO" id="GO:1904153">
    <property type="term" value="P:negative regulation of retrograde protein transport, ER to cytosol"/>
    <property type="evidence" value="ECO:0000315"/>
    <property type="project" value="ParkinsonsUK-UCL"/>
</dbReference>
<dbReference type="GO" id="GO:0018279">
    <property type="term" value="P:protein N-linked glycosylation via asparagine"/>
    <property type="evidence" value="ECO:0000315"/>
    <property type="project" value="UniProtKB"/>
</dbReference>
<dbReference type="GO" id="GO:0000209">
    <property type="term" value="P:protein polyubiquitination"/>
    <property type="evidence" value="ECO:0000318"/>
    <property type="project" value="GO_Central"/>
</dbReference>
<dbReference type="GO" id="GO:0010935">
    <property type="term" value="P:regulation of macrophage cytokine production"/>
    <property type="evidence" value="ECO:0007669"/>
    <property type="project" value="Ensembl"/>
</dbReference>
<dbReference type="GO" id="GO:0032680">
    <property type="term" value="P:regulation of tumor necrosis factor production"/>
    <property type="evidence" value="ECO:0007669"/>
    <property type="project" value="Ensembl"/>
</dbReference>
<dbReference type="GO" id="GO:0007286">
    <property type="term" value="P:spermatid development"/>
    <property type="evidence" value="ECO:0007669"/>
    <property type="project" value="Ensembl"/>
</dbReference>
<dbReference type="CDD" id="cd23799">
    <property type="entry name" value="UBCc_UBE2J"/>
    <property type="match status" value="1"/>
</dbReference>
<dbReference type="FunFam" id="3.10.110.10:FF:000043">
    <property type="entry name" value="ubiquitin-conjugating enzyme E2 J1"/>
    <property type="match status" value="1"/>
</dbReference>
<dbReference type="Gene3D" id="3.10.110.10">
    <property type="entry name" value="Ubiquitin Conjugating Enzyme"/>
    <property type="match status" value="1"/>
</dbReference>
<dbReference type="InterPro" id="IPR050113">
    <property type="entry name" value="Ub_conjugating_enzyme"/>
</dbReference>
<dbReference type="InterPro" id="IPR000608">
    <property type="entry name" value="UBQ-conjugat_E2_core"/>
</dbReference>
<dbReference type="InterPro" id="IPR016135">
    <property type="entry name" value="UBQ-conjugating_enzyme/RWD"/>
</dbReference>
<dbReference type="PANTHER" id="PTHR24067">
    <property type="entry name" value="UBIQUITIN-CONJUGATING ENZYME E2"/>
    <property type="match status" value="1"/>
</dbReference>
<dbReference type="Pfam" id="PF00179">
    <property type="entry name" value="UQ_con"/>
    <property type="match status" value="1"/>
</dbReference>
<dbReference type="SMART" id="SM00212">
    <property type="entry name" value="UBCc"/>
    <property type="match status" value="1"/>
</dbReference>
<dbReference type="SUPFAM" id="SSF54495">
    <property type="entry name" value="UBC-like"/>
    <property type="match status" value="1"/>
</dbReference>
<dbReference type="PROSITE" id="PS50127">
    <property type="entry name" value="UBC_2"/>
    <property type="match status" value="1"/>
</dbReference>
<name>UB2J1_HUMAN</name>
<accession>Q9Y385</accession>
<accession>A8K3F9</accession>
<accession>Q53F25</accession>
<accession>Q5W0N4</accession>
<accession>Q9BZ32</accession>
<accession>Q9NQL3</accession>
<accession>Q9NY66</accession>
<accession>Q9P011</accession>
<accession>Q9P0S0</accession>
<accession>Q9UF10</accession>
<comment type="function">
    <text evidence="2 5 7 8 9 12 13">Catalyzes the covalent attachment of ubiquitin to other proteins. Functions in the selective degradation of misfolded membrane proteins from the endoplasmic reticulum (ERAD) and is essential for cells to recover from ER stress (PubMed:28321712). Plays a role in MAPKAPK2-dependent translational control of TNF-alpha synthesis (PubMed:24020373). Also acts as a platform for perinuclear positioning of the endosomal system by mediating ubiquitination of SQSTM1 through interaction with the E3 ubiquitin-protein ligase RNF26 (PubMed:33472082). Plays a role in male fecundity through the interaction with the E3 ubiquitin-protein ligase RNF133 (PubMed:35831855).</text>
</comment>
<comment type="function">
    <text evidence="11">(Microbial infection) Promotes Dengue virus RNA replication by negatively regulating IFN-beta signaling and mediating 'Lys-48'-linked ubiquitination on IRF3 (PubMed:30157886).</text>
</comment>
<comment type="catalytic activity">
    <reaction evidence="2">
        <text>S-ubiquitinyl-[E1 ubiquitin-activating enzyme]-L-cysteine + [E2 ubiquitin-conjugating enzyme]-L-cysteine = [E1 ubiquitin-activating enzyme]-L-cysteine + S-ubiquitinyl-[E2 ubiquitin-conjugating enzyme]-L-cysteine.</text>
        <dbReference type="EC" id="2.3.2.23"/>
    </reaction>
</comment>
<comment type="pathway">
    <text evidence="2">Protein modification; protein ubiquitination.</text>
</comment>
<comment type="subunit">
    <text evidence="10 12 13">Component of the HRD1 complex, which comprises at least SYNV1/HRD1, DERL1/2, FAM8A1, HERPUD1/HERP, OS9, SEL1L and UBE2J1 (PubMed:28827405). Interacts with E3 ligase RNF26 (PubMed:33472082). Interacts with E3 ligase RNF133 (PubMed:35831855).</text>
</comment>
<comment type="interaction">
    <interactant intactId="EBI-988826">
        <id>Q9Y385</id>
    </interactant>
    <interactant intactId="EBI-7797864">
        <id>P11912</id>
        <label>CD79A</label>
    </interactant>
    <organismsDiffer>false</organismsDiffer>
    <experiments>3</experiments>
</comment>
<comment type="interaction">
    <interactant intactId="EBI-988826">
        <id>Q9Y385</id>
    </interactant>
    <interactant intactId="EBI-13295305">
        <id>Q92903</id>
        <label>CDS1</label>
    </interactant>
    <organismsDiffer>false</organismsDiffer>
    <experiments>3</experiments>
</comment>
<comment type="interaction">
    <interactant intactId="EBI-988826">
        <id>Q9Y385</id>
    </interactant>
    <interactant intactId="EBI-3924906">
        <id>Q9HBJ8</id>
        <label>CLTRN</label>
    </interactant>
    <organismsDiffer>false</organismsDiffer>
    <experiments>3</experiments>
</comment>
<comment type="interaction">
    <interactant intactId="EBI-988826">
        <id>Q9Y385</id>
    </interactant>
    <interactant intactId="EBI-8646596">
        <id>P49447</id>
        <label>CYB561</label>
    </interactant>
    <organismsDiffer>false</organismsDiffer>
    <experiments>3</experiments>
</comment>
<comment type="interaction">
    <interactant intactId="EBI-988826">
        <id>Q9Y385</id>
    </interactant>
    <interactant intactId="EBI-398977">
        <id>Q9BUN8</id>
        <label>DERL1</label>
    </interactant>
    <organismsDiffer>false</organismsDiffer>
    <experiments>3</experiments>
</comment>
<comment type="interaction">
    <interactant intactId="EBI-988826">
        <id>Q9Y385</id>
    </interactant>
    <interactant intactId="EBI-3915253">
        <id>Q15125</id>
        <label>EBP</label>
    </interactant>
    <organismsDiffer>false</organismsDiffer>
    <experiments>3</experiments>
</comment>
<comment type="interaction">
    <interactant intactId="EBI-988826">
        <id>Q9Y385</id>
    </interactant>
    <interactant intactId="EBI-18535450">
        <id>Q9GZR5</id>
        <label>ELOVL4</label>
    </interactant>
    <organismsDiffer>false</organismsDiffer>
    <experiments>3</experiments>
</comment>
<comment type="interaction">
    <interactant intactId="EBI-988826">
        <id>Q9Y385</id>
    </interactant>
    <interactant intactId="EBI-781551">
        <id>Q9Y282</id>
        <label>ERGIC3</label>
    </interactant>
    <organismsDiffer>false</organismsDiffer>
    <experiments>3</experiments>
</comment>
<comment type="interaction">
    <interactant intactId="EBI-988826">
        <id>Q9Y385</id>
    </interactant>
    <interactant intactId="EBI-18304435">
        <id>Q5JX71</id>
        <label>FAM209A</label>
    </interactant>
    <organismsDiffer>false</organismsDiffer>
    <experiments>3</experiments>
</comment>
<comment type="interaction">
    <interactant intactId="EBI-988826">
        <id>Q9Y385</id>
    </interactant>
    <interactant intactId="EBI-18938272">
        <id>Q96KR6</id>
        <label>FAM210B</label>
    </interactant>
    <organismsDiffer>false</organismsDiffer>
    <experiments>3</experiments>
</comment>
<comment type="interaction">
    <interactant intactId="EBI-988826">
        <id>Q9Y385</id>
    </interactant>
    <interactant intactId="EBI-3933251">
        <id>Q9NS71</id>
        <label>GKN1</label>
    </interactant>
    <organismsDiffer>false</organismsDiffer>
    <experiments>3</experiments>
</comment>
<comment type="interaction">
    <interactant intactId="EBI-988826">
        <id>Q9Y385</id>
    </interactant>
    <interactant intactId="EBI-17231387">
        <id>Q6ZVE7</id>
        <label>GOLT1A</label>
    </interactant>
    <organismsDiffer>false</organismsDiffer>
    <experiments>3</experiments>
</comment>
<comment type="interaction">
    <interactant intactId="EBI-988826">
        <id>Q9Y385</id>
    </interactant>
    <interactant intactId="EBI-10266796">
        <id>Q8N5M9</id>
        <label>JAGN1</label>
    </interactant>
    <organismsDiffer>false</organismsDiffer>
    <experiments>3</experiments>
</comment>
<comment type="interaction">
    <interactant intactId="EBI-988826">
        <id>Q9Y385</id>
    </interactant>
    <interactant intactId="EBI-2865663">
        <id>Q13571</id>
        <label>LAPTM5</label>
    </interactant>
    <organismsDiffer>false</organismsDiffer>
    <experiments>3</experiments>
</comment>
<comment type="interaction">
    <interactant intactId="EBI-988826">
        <id>Q9Y385</id>
    </interactant>
    <interactant intactId="EBI-9088345">
        <id>O95867</id>
        <label>LY6G6C</label>
    </interactant>
    <organismsDiffer>false</organismsDiffer>
    <experiments>3</experiments>
</comment>
<comment type="interaction">
    <interactant intactId="EBI-988826">
        <id>Q9Y385</id>
    </interactant>
    <interactant intactId="EBI-10329546">
        <id>Q9Y5Y7</id>
        <label>LYVE1</label>
    </interactant>
    <organismsDiffer>false</organismsDiffer>
    <experiments>3</experiments>
</comment>
<comment type="interaction">
    <interactant intactId="EBI-988826">
        <id>Q9Y385</id>
    </interactant>
    <interactant intactId="EBI-373355">
        <id>Q5SR56</id>
        <label>MFSD14B</label>
    </interactant>
    <organismsDiffer>false</organismsDiffer>
    <experiments>3</experiments>
</comment>
<comment type="interaction">
    <interactant intactId="EBI-988826">
        <id>Q9Y385</id>
    </interactant>
    <interactant intactId="EBI-745345">
        <id>Q96ES6</id>
        <label>MFSD3</label>
    </interactant>
    <organismsDiffer>false</organismsDiffer>
    <experiments>3</experiments>
</comment>
<comment type="interaction">
    <interactant intactId="EBI-988826">
        <id>Q9Y385</id>
    </interactant>
    <interactant intactId="EBI-17931225">
        <id>Q96DS6</id>
        <label>MS4A6E</label>
    </interactant>
    <organismsDiffer>false</organismsDiffer>
    <experiments>3</experiments>
</comment>
<comment type="interaction">
    <interactant intactId="EBI-988826">
        <id>Q9Y385</id>
    </interactant>
    <interactant intactId="EBI-2558379">
        <id>O60361</id>
        <label>NME2P1</label>
    </interactant>
    <organismsDiffer>false</organismsDiffer>
    <experiments>2</experiments>
</comment>
<comment type="interaction">
    <interactant intactId="EBI-988826">
        <id>Q9Y385</id>
    </interactant>
    <interactant intactId="EBI-12955265">
        <id>Q96GM1</id>
        <label>PLPPR2</label>
    </interactant>
    <organismsDiffer>false</organismsDiffer>
    <experiments>3</experiments>
</comment>
<comment type="interaction">
    <interactant intactId="EBI-988826">
        <id>Q9Y385</id>
    </interactant>
    <interactant intactId="EBI-21251460">
        <id>O60260-5</id>
        <label>PRKN</label>
    </interactant>
    <organismsDiffer>false</organismsDiffer>
    <experiments>3</experiments>
</comment>
<comment type="interaction">
    <interactant intactId="EBI-988826">
        <id>Q9Y385</id>
    </interactant>
    <interactant intactId="EBI-12902928">
        <id>Q8NFJ6</id>
        <label>PROKR2</label>
    </interactant>
    <organismsDiffer>false</organismsDiffer>
    <experiments>3</experiments>
</comment>
<comment type="interaction">
    <interactant intactId="EBI-988826">
        <id>Q9Y385</id>
    </interactant>
    <interactant intactId="EBI-7545592">
        <id>Q9H6H4</id>
        <label>REEP4</label>
    </interactant>
    <organismsDiffer>false</organismsDiffer>
    <experiments>3</experiments>
</comment>
<comment type="interaction">
    <interactant intactId="EBI-988826">
        <id>Q9Y385</id>
    </interactant>
    <interactant intactId="EBI-2855401">
        <id>Q9BY50</id>
        <label>SEC11C</label>
    </interactant>
    <organismsDiffer>false</organismsDiffer>
    <experiments>3</experiments>
</comment>
<comment type="interaction">
    <interactant intactId="EBI-988826">
        <id>Q9Y385</id>
    </interactant>
    <interactant intactId="EBI-18159983">
        <id>Q3KNW5</id>
        <label>SLC10A6</label>
    </interactant>
    <organismsDiffer>false</organismsDiffer>
    <experiments>3</experiments>
</comment>
<comment type="interaction">
    <interactant intactId="EBI-988826">
        <id>Q9Y385</id>
    </interactant>
    <interactant intactId="EBI-18029942">
        <id>P58743-6</id>
        <label>SLC26A5</label>
    </interactant>
    <organismsDiffer>false</organismsDiffer>
    <experiments>3</experiments>
</comment>
<comment type="interaction">
    <interactant intactId="EBI-988826">
        <id>Q9Y385</id>
    </interactant>
    <interactant intactId="EBI-12898013">
        <id>Q9NP94</id>
        <label>SLC39A2</label>
    </interactant>
    <organismsDiffer>false</organismsDiffer>
    <experiments>3</experiments>
</comment>
<comment type="interaction">
    <interactant intactId="EBI-988826">
        <id>Q9Y385</id>
    </interactant>
    <interactant intactId="EBI-947849">
        <id>Q86TM6</id>
        <label>SYVN1</label>
    </interactant>
    <organismsDiffer>false</organismsDiffer>
    <experiments>15</experiments>
</comment>
<comment type="interaction">
    <interactant intactId="EBI-988826">
        <id>Q9Y385</id>
    </interactant>
    <interactant intactId="EBI-12947623">
        <id>Q96MV1</id>
        <label>TLCD4</label>
    </interactant>
    <organismsDiffer>false</organismsDiffer>
    <experiments>3</experiments>
</comment>
<comment type="interaction">
    <interactant intactId="EBI-988826">
        <id>Q9Y385</id>
    </interactant>
    <interactant intactId="EBI-13351685">
        <id>Q96CE8</id>
        <label>TM4SF18</label>
    </interactant>
    <organismsDiffer>false</organismsDiffer>
    <experiments>3</experiments>
</comment>
<comment type="interaction">
    <interactant intactId="EBI-988826">
        <id>Q9Y385</id>
    </interactant>
    <interactant intactId="EBI-6448756">
        <id>Q96DZ7</id>
        <label>TM4SF19</label>
    </interactant>
    <organismsDiffer>false</organismsDiffer>
    <experiments>3</experiments>
</comment>
<comment type="interaction">
    <interactant intactId="EBI-988826">
        <id>Q9Y385</id>
    </interactant>
    <interactant intactId="EBI-8638294">
        <id>Q9NUH8</id>
        <label>TMEM14B</label>
    </interactant>
    <organismsDiffer>false</organismsDiffer>
    <experiments>3</experiments>
</comment>
<comment type="interaction">
    <interactant intactId="EBI-988826">
        <id>Q9Y385</id>
    </interactant>
    <interactant intactId="EBI-726044">
        <id>Q9NW97</id>
        <label>TMEM51</label>
    </interactant>
    <organismsDiffer>false</organismsDiffer>
    <experiments>3</experiments>
</comment>
<comment type="interaction">
    <interactant intactId="EBI-988826">
        <id>Q9Y385</id>
    </interactant>
    <interactant intactId="EBI-6447886">
        <id>Q9Y320</id>
        <label>TMX2</label>
    </interactant>
    <organismsDiffer>false</organismsDiffer>
    <experiments>3</experiments>
</comment>
<comment type="interaction">
    <interactant intactId="EBI-988826">
        <id>Q9Y385</id>
    </interactant>
    <interactant intactId="EBI-18055230">
        <id>P34981</id>
        <label>TRHR</label>
    </interactant>
    <organismsDiffer>false</organismsDiffer>
    <experiments>3</experiments>
</comment>
<comment type="interaction">
    <interactant intactId="EBI-988826">
        <id>Q9Y385</id>
    </interactant>
    <interactant intactId="EBI-12837904">
        <id>Q96MV8</id>
        <label>ZDHHC15</label>
    </interactant>
    <organismsDiffer>false</organismsDiffer>
    <experiments>3</experiments>
</comment>
<comment type="subcellular location">
    <subcellularLocation>
        <location evidence="5 8 12 13">Endoplasmic reticulum membrane</location>
        <topology evidence="5">Single-pass type IV membrane protein</topology>
    </subcellularLocation>
</comment>
<comment type="tissue specificity">
    <text evidence="13">Expressed in testes.</text>
</comment>
<comment type="induction">
    <text evidence="11">By Dengue virus infection.</text>
</comment>
<comment type="PTM">
    <text evidence="8">Phosphorylated at Ser-184 in a cytosolic stress-dependent manner by MAP kinase p38 MAPKAPK2.</text>
</comment>
<comment type="PTM">
    <text evidence="9">Phosphorylated UBE2J1 is rapidly ubiquitinated and subsequently degraded by the proteasome.</text>
</comment>
<comment type="similarity">
    <text evidence="2">Belongs to the ubiquitin-conjugating enzyme family.</text>
</comment>
<comment type="sequence caution" evidence="16">
    <conflict type="erroneous initiation">
        <sequence resource="EMBL-CDS" id="AAD34071"/>
    </conflict>
    <text>Extended N-terminus.</text>
</comment>
<comment type="sequence caution" evidence="16">
    <conflict type="frameshift">
        <sequence resource="EMBL-CDS" id="AAF36125"/>
    </conflict>
</comment>
<proteinExistence type="evidence at protein level"/>
<feature type="chain" id="PRO_0000082594" description="Ubiquitin-conjugating enzyme E2 J1">
    <location>
        <begin position="1"/>
        <end position="318"/>
    </location>
</feature>
<feature type="topological domain" description="Cytoplasmic" evidence="1">
    <location>
        <begin position="1"/>
        <end position="282"/>
    </location>
</feature>
<feature type="transmembrane region" description="Helical; Anchor for type IV membrane protein" evidence="1">
    <location>
        <begin position="283"/>
        <end position="303"/>
    </location>
</feature>
<feature type="topological domain" description="Lumenal" evidence="1">
    <location>
        <begin position="304"/>
        <end position="318"/>
    </location>
</feature>
<feature type="domain" description="UBC core" evidence="2">
    <location>
        <begin position="10"/>
        <end position="160"/>
    </location>
</feature>
<feature type="region of interest" description="Disordered" evidence="3">
    <location>
        <begin position="229"/>
        <end position="283"/>
    </location>
</feature>
<feature type="compositionally biased region" description="Polar residues" evidence="3">
    <location>
        <begin position="229"/>
        <end position="248"/>
    </location>
</feature>
<feature type="compositionally biased region" description="Low complexity" evidence="3">
    <location>
        <begin position="249"/>
        <end position="268"/>
    </location>
</feature>
<feature type="active site" description="Glycyl thioester intermediate" evidence="2">
    <location>
        <position position="91"/>
    </location>
</feature>
<feature type="modified residue" description="Phosphoserine; by MAPKAPK2" evidence="8 21">
    <location>
        <position position="184"/>
    </location>
</feature>
<feature type="modified residue" description="Phosphoserine" evidence="19 20 21 22">
    <location>
        <position position="266"/>
    </location>
</feature>
<feature type="modified residue" description="Phosphoserine" evidence="18 21">
    <location>
        <position position="268"/>
    </location>
</feature>
<feature type="sequence variant" id="VAR_019689" description="In dbSNP:rs8099." evidence="5">
    <original>G</original>
    <variation>V</variation>
    <location>
        <position position="55"/>
    </location>
</feature>
<feature type="sequence variant" id="VAR_019690" description="In dbSNP:rs10502." evidence="4 6 14 15">
    <original>L</original>
    <variation>V</variation>
    <location>
        <position position="229"/>
    </location>
</feature>
<feature type="mutagenesis site" description="Loss of catalytic activity. Slows down degradation of misfolded proteins from the ER." evidence="5">
    <original>C</original>
    <variation>S</variation>
    <location>
        <position position="91"/>
    </location>
</feature>
<feature type="mutagenesis site" description="Complete loss of stress-dependent phosphorylation. Loss of cell recovery for ER stress." evidence="8 9">
    <original>S</original>
    <variation>A</variation>
    <location>
        <position position="184"/>
    </location>
</feature>
<feature type="sequence conflict" description="In Ref. 3; AAD34071." evidence="16" ref="3">
    <original>QP</original>
    <variation>HA</variation>
    <location>
        <begin position="32"/>
        <end position="33"/>
    </location>
</feature>
<feature type="sequence conflict" description="In Ref. 2; AAF21505." evidence="16" ref="2">
    <original>Q</original>
    <variation>H</variation>
    <location>
        <position position="276"/>
    </location>
</feature>
<keyword id="KW-0067">ATP-binding</keyword>
<keyword id="KW-0256">Endoplasmic reticulum</keyword>
<keyword id="KW-0472">Membrane</keyword>
<keyword id="KW-0547">Nucleotide-binding</keyword>
<keyword id="KW-0597">Phosphoprotein</keyword>
<keyword id="KW-1267">Proteomics identification</keyword>
<keyword id="KW-1185">Reference proteome</keyword>
<keyword id="KW-0808">Transferase</keyword>
<keyword id="KW-0812">Transmembrane</keyword>
<keyword id="KW-1133">Transmembrane helix</keyword>
<keyword id="KW-0832">Ubl conjugation</keyword>
<keyword id="KW-0833">Ubl conjugation pathway</keyword>
<sequence>METRYNLKSPAVKRLMKEAAELKDPTDHYHAQPLEDNLFEWHFTVRGPPDSDFDGGVYHGRIVLPPEYPMKPPSIILLTANGRFEVGKKICLSISGHHPETWQPSWSIRTALLAIIGFMPTKGEGAIGSLDYTPEERRALAKKSQDFCCEGCGSAMKDVLLPLKSGSDSSQADQEAKELARQISFKAEVNSSGKTISESDLNHSFSLTDLQDDIPTTFQGATASTSYGLQNSSAASFHQPTQPVAKNTSMSPRQRRAQQQSQRRLSTSPDVIQGHQPRDNHTDHGGSAVLIVILTLALAALIFRRIYLANEYIFDFEL</sequence>
<protein>
    <recommendedName>
        <fullName>Ubiquitin-conjugating enzyme E2 J1</fullName>
        <ecNumber evidence="12">2.3.2.23</ecNumber>
    </recommendedName>
    <alternativeName>
        <fullName>E2 ubiquitin-conjugating enzyme J1</fullName>
    </alternativeName>
    <alternativeName>
        <fullName>Non-canonical ubiquitin-conjugating enzyme 1</fullName>
        <shortName>NCUBE-1</shortName>
    </alternativeName>
    <alternativeName>
        <fullName>Yeast ubiquitin-conjugating enzyme UBC6 homolog E</fullName>
        <shortName>HsUBC6e</shortName>
    </alternativeName>
</protein>
<evidence type="ECO:0000255" key="1"/>
<evidence type="ECO:0000255" key="2">
    <source>
        <dbReference type="PROSITE-ProRule" id="PRU00388"/>
    </source>
</evidence>
<evidence type="ECO:0000256" key="3">
    <source>
        <dbReference type="SAM" id="MobiDB-lite"/>
    </source>
</evidence>
<evidence type="ECO:0000269" key="4">
    <source>
    </source>
</evidence>
<evidence type="ECO:0000269" key="5">
    <source>
    </source>
</evidence>
<evidence type="ECO:0000269" key="6">
    <source>
    </source>
</evidence>
<evidence type="ECO:0000269" key="7">
    <source>
    </source>
</evidence>
<evidence type="ECO:0000269" key="8">
    <source>
    </source>
</evidence>
<evidence type="ECO:0000269" key="9">
    <source>
    </source>
</evidence>
<evidence type="ECO:0000269" key="10">
    <source>
    </source>
</evidence>
<evidence type="ECO:0000269" key="11">
    <source>
    </source>
</evidence>
<evidence type="ECO:0000269" key="12">
    <source>
    </source>
</evidence>
<evidence type="ECO:0000269" key="13">
    <source>
    </source>
</evidence>
<evidence type="ECO:0000269" key="14">
    <source ref="6"/>
</evidence>
<evidence type="ECO:0000269" key="15">
    <source ref="8"/>
</evidence>
<evidence type="ECO:0000305" key="16"/>
<evidence type="ECO:0000312" key="17">
    <source>
        <dbReference type="HGNC" id="HGNC:17598"/>
    </source>
</evidence>
<evidence type="ECO:0007744" key="18">
    <source>
    </source>
</evidence>
<evidence type="ECO:0007744" key="19">
    <source>
    </source>
</evidence>
<evidence type="ECO:0007744" key="20">
    <source>
    </source>
</evidence>
<evidence type="ECO:0007744" key="21">
    <source>
    </source>
</evidence>
<evidence type="ECO:0007744" key="22">
    <source>
    </source>
</evidence>
<gene>
    <name evidence="17" type="primary">UBE2J1</name>
    <name type="synonym">NCUBE1</name>
    <name type="ORF">CGI-76</name>
    <name type="ORF">HSPC153</name>
    <name type="ORF">HSPC205</name>
</gene>
<organism>
    <name type="scientific">Homo sapiens</name>
    <name type="common">Human</name>
    <dbReference type="NCBI Taxonomy" id="9606"/>
    <lineage>
        <taxon>Eukaryota</taxon>
        <taxon>Metazoa</taxon>
        <taxon>Chordata</taxon>
        <taxon>Craniata</taxon>
        <taxon>Vertebrata</taxon>
        <taxon>Euteleostomi</taxon>
        <taxon>Mammalia</taxon>
        <taxon>Eutheria</taxon>
        <taxon>Euarchontoglires</taxon>
        <taxon>Primates</taxon>
        <taxon>Haplorrhini</taxon>
        <taxon>Catarrhini</taxon>
        <taxon>Hominidae</taxon>
        <taxon>Homo</taxon>
    </lineage>
</organism>